<protein>
    <recommendedName>
        <fullName evidence="1">Arginine biosynthesis bifunctional protein ArgJ, mitochondrial</fullName>
    </recommendedName>
    <domain>
        <recommendedName>
            <fullName evidence="1">Glutamate N-acetyltransferase</fullName>
            <shortName evidence="1">GAT</shortName>
            <ecNumber evidence="1">2.3.1.35</ecNumber>
        </recommendedName>
        <alternativeName>
            <fullName evidence="1">Ornithine acetyltransferase</fullName>
            <shortName evidence="1">OATase</shortName>
        </alternativeName>
        <alternativeName>
            <fullName evidence="1">Ornithine transacetylase</fullName>
        </alternativeName>
    </domain>
    <domain>
        <recommendedName>
            <fullName evidence="1">Amino-acid acetyltransferase</fullName>
            <ecNumber evidence="1">2.3.1.1</ecNumber>
        </recommendedName>
        <alternativeName>
            <fullName evidence="1">N-acetylglutamate synthase</fullName>
            <shortName evidence="1">AGS</shortName>
        </alternativeName>
    </domain>
    <component>
        <recommendedName>
            <fullName evidence="1">Arginine biosynthesis bifunctional protein ArgJ alpha chain</fullName>
        </recommendedName>
    </component>
    <component>
        <recommendedName>
            <fullName evidence="1">Arginine biosynthesis bifunctional protein ArgJ beta chain</fullName>
        </recommendedName>
    </component>
</protein>
<organism>
    <name type="scientific">Candida tropicalis (strain ATCC MYA-3404 / T1)</name>
    <name type="common">Yeast</name>
    <dbReference type="NCBI Taxonomy" id="294747"/>
    <lineage>
        <taxon>Eukaryota</taxon>
        <taxon>Fungi</taxon>
        <taxon>Dikarya</taxon>
        <taxon>Ascomycota</taxon>
        <taxon>Saccharomycotina</taxon>
        <taxon>Pichiomycetes</taxon>
        <taxon>Debaryomycetaceae</taxon>
        <taxon>Candida/Lodderomyces clade</taxon>
        <taxon>Candida</taxon>
    </lineage>
</organism>
<dbReference type="EC" id="2.3.1.35" evidence="1"/>
<dbReference type="EC" id="2.3.1.1" evidence="1"/>
<dbReference type="EMBL" id="GG692401">
    <property type="protein sequence ID" value="EER31318.1"/>
    <property type="molecule type" value="Genomic_DNA"/>
</dbReference>
<dbReference type="RefSeq" id="XP_002550750.1">
    <property type="nucleotide sequence ID" value="XM_002550704.1"/>
</dbReference>
<dbReference type="SMR" id="C5MG55"/>
<dbReference type="STRING" id="294747.C5MG55"/>
<dbReference type="MEROPS" id="T05.001"/>
<dbReference type="EnsemblFungi" id="CTRG_05048-t43_1">
    <property type="protein sequence ID" value="CTRG_05048-t43_1-p1"/>
    <property type="gene ID" value="CTRG_05048"/>
</dbReference>
<dbReference type="GeneID" id="8299204"/>
<dbReference type="KEGG" id="ctp:CTRG_05048"/>
<dbReference type="VEuPathDB" id="FungiDB:CTRG_05048"/>
<dbReference type="eggNOG" id="KOG2786">
    <property type="taxonomic scope" value="Eukaryota"/>
</dbReference>
<dbReference type="HOGENOM" id="CLU_027172_1_0_1"/>
<dbReference type="OrthoDB" id="2017946at2759"/>
<dbReference type="UniPathway" id="UPA00068">
    <property type="reaction ID" value="UER00106"/>
</dbReference>
<dbReference type="UniPathway" id="UPA00068">
    <property type="reaction ID" value="UER00111"/>
</dbReference>
<dbReference type="Proteomes" id="UP000002037">
    <property type="component" value="Unassembled WGS sequence"/>
</dbReference>
<dbReference type="GO" id="GO:0005759">
    <property type="term" value="C:mitochondrial matrix"/>
    <property type="evidence" value="ECO:0007669"/>
    <property type="project" value="UniProtKB-SubCell"/>
</dbReference>
<dbReference type="GO" id="GO:0004358">
    <property type="term" value="F:glutamate N-acetyltransferase activity"/>
    <property type="evidence" value="ECO:0007669"/>
    <property type="project" value="UniProtKB-UniRule"/>
</dbReference>
<dbReference type="GO" id="GO:0004042">
    <property type="term" value="F:L-glutamate N-acetyltransferase activity"/>
    <property type="evidence" value="ECO:0007669"/>
    <property type="project" value="UniProtKB-UniRule"/>
</dbReference>
<dbReference type="GO" id="GO:0006526">
    <property type="term" value="P:L-arginine biosynthetic process"/>
    <property type="evidence" value="ECO:0007669"/>
    <property type="project" value="UniProtKB-UniRule"/>
</dbReference>
<dbReference type="GO" id="GO:0006592">
    <property type="term" value="P:ornithine biosynthetic process"/>
    <property type="evidence" value="ECO:0007669"/>
    <property type="project" value="TreeGrafter"/>
</dbReference>
<dbReference type="CDD" id="cd02152">
    <property type="entry name" value="OAT"/>
    <property type="match status" value="1"/>
</dbReference>
<dbReference type="FunFam" id="3.60.70.12:FF:000001">
    <property type="entry name" value="Arginine biosynthesis bifunctional protein ArgJ, chloroplastic"/>
    <property type="match status" value="1"/>
</dbReference>
<dbReference type="FunFam" id="3.30.2330.10:FF:000001">
    <property type="entry name" value="Arginine biosynthesis bifunctional protein ArgJ, mitochondrial"/>
    <property type="match status" value="1"/>
</dbReference>
<dbReference type="Gene3D" id="3.30.2330.10">
    <property type="entry name" value="arginine biosynthesis bifunctional protein suprefamily"/>
    <property type="match status" value="1"/>
</dbReference>
<dbReference type="Gene3D" id="3.10.20.340">
    <property type="entry name" value="ArgJ beta chain, C-terminal domain"/>
    <property type="match status" value="1"/>
</dbReference>
<dbReference type="Gene3D" id="3.60.70.12">
    <property type="entry name" value="L-amino peptidase D-ALA esterase/amidase"/>
    <property type="match status" value="1"/>
</dbReference>
<dbReference type="HAMAP" id="MF_01106">
    <property type="entry name" value="ArgJ"/>
    <property type="match status" value="1"/>
</dbReference>
<dbReference type="InterPro" id="IPR002813">
    <property type="entry name" value="Arg_biosynth_ArgJ"/>
</dbReference>
<dbReference type="InterPro" id="IPR016117">
    <property type="entry name" value="ArgJ-like_dom_sf"/>
</dbReference>
<dbReference type="InterPro" id="IPR042195">
    <property type="entry name" value="ArgJ_beta_C"/>
</dbReference>
<dbReference type="NCBIfam" id="TIGR00120">
    <property type="entry name" value="ArgJ"/>
    <property type="match status" value="1"/>
</dbReference>
<dbReference type="NCBIfam" id="NF003802">
    <property type="entry name" value="PRK05388.1"/>
    <property type="match status" value="1"/>
</dbReference>
<dbReference type="PANTHER" id="PTHR23100">
    <property type="entry name" value="ARGININE BIOSYNTHESIS BIFUNCTIONAL PROTEIN ARGJ"/>
    <property type="match status" value="1"/>
</dbReference>
<dbReference type="PANTHER" id="PTHR23100:SF0">
    <property type="entry name" value="ARGININE BIOSYNTHESIS BIFUNCTIONAL PROTEIN ARGJ, MITOCHONDRIAL"/>
    <property type="match status" value="1"/>
</dbReference>
<dbReference type="Pfam" id="PF01960">
    <property type="entry name" value="ArgJ"/>
    <property type="match status" value="1"/>
</dbReference>
<dbReference type="SUPFAM" id="SSF56266">
    <property type="entry name" value="DmpA/ArgJ-like"/>
    <property type="match status" value="1"/>
</dbReference>
<gene>
    <name type="ORF">CTRG_05048</name>
</gene>
<accession>C5MG55</accession>
<evidence type="ECO:0000255" key="1">
    <source>
        <dbReference type="HAMAP-Rule" id="MF_03124"/>
    </source>
</evidence>
<name>ARGJ_CANTT</name>
<comment type="function">
    <text evidence="1">Catalyzes two activities which are involved in the cyclic version of arginine biosynthesis: the synthesis of acetylglutamate from glutamate and acetyl-CoA, and of ornithine by transacetylation between acetylornithine and glutamate.</text>
</comment>
<comment type="catalytic activity">
    <reaction evidence="1">
        <text>N(2)-acetyl-L-ornithine + L-glutamate = N-acetyl-L-glutamate + L-ornithine</text>
        <dbReference type="Rhea" id="RHEA:15349"/>
        <dbReference type="ChEBI" id="CHEBI:29985"/>
        <dbReference type="ChEBI" id="CHEBI:44337"/>
        <dbReference type="ChEBI" id="CHEBI:46911"/>
        <dbReference type="ChEBI" id="CHEBI:57805"/>
        <dbReference type="EC" id="2.3.1.35"/>
    </reaction>
</comment>
<comment type="catalytic activity">
    <reaction evidence="1">
        <text>L-glutamate + acetyl-CoA = N-acetyl-L-glutamate + CoA + H(+)</text>
        <dbReference type="Rhea" id="RHEA:24292"/>
        <dbReference type="ChEBI" id="CHEBI:15378"/>
        <dbReference type="ChEBI" id="CHEBI:29985"/>
        <dbReference type="ChEBI" id="CHEBI:44337"/>
        <dbReference type="ChEBI" id="CHEBI:57287"/>
        <dbReference type="ChEBI" id="CHEBI:57288"/>
        <dbReference type="EC" id="2.3.1.1"/>
    </reaction>
</comment>
<comment type="pathway">
    <text evidence="1">Amino-acid biosynthesis; L-arginine biosynthesis; L-ornithine and N-acetyl-L-glutamate from L-glutamate and N(2)-acetyl-L-ornithine (cyclic): step 1/1.</text>
</comment>
<comment type="pathway">
    <text evidence="1">Amino-acid biosynthesis; L-arginine biosynthesis; N(2)-acetyl-L-ornithine from L-glutamate: step 1/4.</text>
</comment>
<comment type="subunit">
    <text evidence="1">Heterodimer of an alpha and a beta chain.</text>
</comment>
<comment type="subcellular location">
    <subcellularLocation>
        <location evidence="1">Mitochondrion matrix</location>
    </subcellularLocation>
</comment>
<comment type="PTM">
    <text evidence="1">The alpha and beta chains are autoproteolytically processed from a single precursor protein within the mitochondrion.</text>
</comment>
<comment type="miscellaneous">
    <text evidence="1">This protein may be expected to contain an N-terminal transit peptide but none has been predicted.</text>
</comment>
<comment type="similarity">
    <text evidence="1">Belongs to the ArgJ family.</text>
</comment>
<proteinExistence type="inferred from homology"/>
<feature type="chain" id="PRO_0000398038" description="Arginine biosynthesis bifunctional protein ArgJ alpha chain" evidence="1">
    <location>
        <begin position="1"/>
        <end position="210"/>
    </location>
</feature>
<feature type="chain" id="PRO_0000398039" description="Arginine biosynthesis bifunctional protein ArgJ beta chain" evidence="1">
    <location>
        <begin position="211"/>
        <end position="405"/>
    </location>
</feature>
<feature type="active site" description="Nucleophile" evidence="1">
    <location>
        <position position="211"/>
    </location>
</feature>
<feature type="binding site" evidence="1">
    <location>
        <position position="174"/>
    </location>
    <ligand>
        <name>substrate</name>
    </ligand>
</feature>
<feature type="binding site" evidence="1">
    <location>
        <position position="200"/>
    </location>
    <ligand>
        <name>substrate</name>
    </ligand>
</feature>
<feature type="binding site" evidence="1">
    <location>
        <position position="211"/>
    </location>
    <ligand>
        <name>substrate</name>
    </ligand>
</feature>
<feature type="binding site" evidence="1">
    <location>
        <position position="300"/>
    </location>
    <ligand>
        <name>substrate</name>
    </ligand>
</feature>
<feature type="site" description="Involved in the stabilization of negative charge on the oxyanion by the formation of the oxyanion hole" evidence="1">
    <location>
        <position position="134"/>
    </location>
</feature>
<feature type="site" description="Involved in the stabilization of negative charge on the oxyanion by the formation of the oxyanion hole" evidence="1">
    <location>
        <position position="135"/>
    </location>
</feature>
<feature type="site" description="Cleavage; by autolysis" evidence="1">
    <location>
        <begin position="210"/>
        <end position="211"/>
    </location>
</feature>
<sequence>MSISKYSIRFLSDKATRFVPKSGVYPKGYAVGGIHCGVKKDGKSLDLAILQNTFNKEASTAGVFTQNKFKAAPVQVSMRILKQKSGSGINSFVINSGNANAVTGSKGMKDAEEMVTVTDSVLENPKDSTLVMSTGVIGNNLPIDNILTGIPKLSLNHLGNTHQHWIDCATAICTTDTFPKLVTKQFNLGNDTYTLAGLCKGAGMICPNMATLLGFFVTDAPVSPNALQQILRYAVDRSFNSITVDGDMSTNDTIVAMANGAAGGELIDNTSSSAERFSALQTEIVDFAQQLAQLVVRDGEGATKFITLKVNDALSYKDAKSIASSIANSSLFKTAMYGKDANWGRILCAIGYADVSTDQSVIPNKTSVKFVPVDGSEPIKIIWLMVNSKKLTKIELQKYYKMKIW</sequence>
<reference key="1">
    <citation type="journal article" date="2009" name="Nature">
        <title>Evolution of pathogenicity and sexual reproduction in eight Candida genomes.</title>
        <authorList>
            <person name="Butler G."/>
            <person name="Rasmussen M.D."/>
            <person name="Lin M.F."/>
            <person name="Santos M.A.S."/>
            <person name="Sakthikumar S."/>
            <person name="Munro C.A."/>
            <person name="Rheinbay E."/>
            <person name="Grabherr M."/>
            <person name="Forche A."/>
            <person name="Reedy J.L."/>
            <person name="Agrafioti I."/>
            <person name="Arnaud M.B."/>
            <person name="Bates S."/>
            <person name="Brown A.J.P."/>
            <person name="Brunke S."/>
            <person name="Costanzo M.C."/>
            <person name="Fitzpatrick D.A."/>
            <person name="de Groot P.W.J."/>
            <person name="Harris D."/>
            <person name="Hoyer L.L."/>
            <person name="Hube B."/>
            <person name="Klis F.M."/>
            <person name="Kodira C."/>
            <person name="Lennard N."/>
            <person name="Logue M.E."/>
            <person name="Martin R."/>
            <person name="Neiman A.M."/>
            <person name="Nikolaou E."/>
            <person name="Quail M.A."/>
            <person name="Quinn J."/>
            <person name="Santos M.C."/>
            <person name="Schmitzberger F.F."/>
            <person name="Sherlock G."/>
            <person name="Shah P."/>
            <person name="Silverstein K.A.T."/>
            <person name="Skrzypek M.S."/>
            <person name="Soll D."/>
            <person name="Staggs R."/>
            <person name="Stansfield I."/>
            <person name="Stumpf M.P.H."/>
            <person name="Sudbery P.E."/>
            <person name="Srikantha T."/>
            <person name="Zeng Q."/>
            <person name="Berman J."/>
            <person name="Berriman M."/>
            <person name="Heitman J."/>
            <person name="Gow N.A.R."/>
            <person name="Lorenz M.C."/>
            <person name="Birren B.W."/>
            <person name="Kellis M."/>
            <person name="Cuomo C.A."/>
        </authorList>
    </citation>
    <scope>NUCLEOTIDE SEQUENCE [LARGE SCALE GENOMIC DNA]</scope>
    <source>
        <strain>ATCC MYA-3404 / T1</strain>
    </source>
</reference>
<keyword id="KW-0012">Acyltransferase</keyword>
<keyword id="KW-0028">Amino-acid biosynthesis</keyword>
<keyword id="KW-0055">Arginine biosynthesis</keyword>
<keyword id="KW-0068">Autocatalytic cleavage</keyword>
<keyword id="KW-0496">Mitochondrion</keyword>
<keyword id="KW-0511">Multifunctional enzyme</keyword>
<keyword id="KW-1185">Reference proteome</keyword>
<keyword id="KW-0808">Transferase</keyword>